<comment type="function">
    <text evidence="1">E1 component of the 2-oxoglutarate dehydrogenase (OGDH) complex which catalyzes the decarboxylation of 2-oxoglutarate, the first step in the conversion of 2-oxoglutarate to succinyl-CoA and CO(2).</text>
</comment>
<comment type="catalytic activity">
    <reaction evidence="1">
        <text>N(6)-[(R)-lipoyl]-L-lysyl-[protein] + 2-oxoglutarate + H(+) = N(6)-[(R)-S(8)-succinyldihydrolipoyl]-L-lysyl-[protein] + CO2</text>
        <dbReference type="Rhea" id="RHEA:12188"/>
        <dbReference type="Rhea" id="RHEA-COMP:10474"/>
        <dbReference type="Rhea" id="RHEA-COMP:20092"/>
        <dbReference type="ChEBI" id="CHEBI:15378"/>
        <dbReference type="ChEBI" id="CHEBI:16526"/>
        <dbReference type="ChEBI" id="CHEBI:16810"/>
        <dbReference type="ChEBI" id="CHEBI:83099"/>
        <dbReference type="ChEBI" id="CHEBI:83120"/>
        <dbReference type="EC" id="1.2.4.2"/>
    </reaction>
</comment>
<comment type="cofactor">
    <cofactor evidence="1">
        <name>thiamine diphosphate</name>
        <dbReference type="ChEBI" id="CHEBI:58937"/>
    </cofactor>
</comment>
<comment type="subunit">
    <text evidence="1">Homodimer. Part of the 2-oxoglutarate dehydrogenase (OGDH) complex composed of E1 (2-oxoglutarate dehydrogenase), E2 (dihydrolipoamide succinyltransferase) and E3 (dihydrolipoamide dehydrogenase); the complex contains multiple copies of the three enzymatic components (E1, E2 and E3).</text>
</comment>
<comment type="similarity">
    <text evidence="1">Belongs to the alpha-ketoglutarate dehydrogenase family.</text>
</comment>
<sequence length="932" mass="105343">MTNERKEVSEAPVNFGANLGLMLDLYDDFLQDPSSVPEDLQVLFSTIKNDDSIVPALKSTSSQNSDGTIKRVMRLIDNIRQYGHLKADIYPVNPPKRKHVPKLEIEDFDLDQQTLEGISAGIVSDHFADIYDNAYEAILRMEKRYKGPIAFEYTHINNNTERGWLKRRIETPYKVTLNNNEKRALFKQLAYVEGFEKYLHKNFVGAKRFSIEGVDALVPMLQRTITIAAKEGIKNIQIGMAHRGRLNVLTHVLEKPYEMMISEFMHTDPMKFLPEDGSLQLTAGWTGDVKYHLGGIKTTDSYGTMQRIALANNPSHLEIVAPVVEGRTRAAQDDTQRAGAPTTDHHKAMPIIIHGDAAYPGQGINFETMNLGNLKGYSTGGSLHIITNNRIGFTTEPIDARSTTYSTDVAKGYDVPIFHVNADDVEATIEAIDIAMEFRKEFHKDVVIDLVGYRRFGHNEMDEPSITNPVPYQNIRKHDSVEYVFGKKLVNEGVISEDEMHSFIEQVQKELRQAHDKINKADKMDNPDMEKPADLALPLQADEQSFTFDHLKEINDALLTYPDGFNILKKLNKVLEKRHEPFNKEDGLVDWAQAEQLAFATILQDGTPIRLTGQDSERGTFSHRHAVLHDEQTGETYTPLHHVPDQKATFDIHNSPLSEAAVVGFEYGYNVENKKSFNIWEAQYGDFANMSQMIFDNFLFSSRSKWGERSGLTLFLPHAYEGQGPEHSSARLERFLQLAAENNCTVVNLSSSSNYFHLLRAQAASLDSEQMRPLVVMSPKSLLRNKTVAKPIDEFTSGGFEPILTESYQADKVTKVILATGKMFIDLKEALAKNPDESVLLVAIERLYPFPEEEIEALLAQLPNLEEVSWVQEEPKNQGAWLYVYPYVKVLVADKYDLSYHGRIQRAAPAEGDGEIHKLVQNKIIENALKNN</sequence>
<feature type="chain" id="PRO_0000162176" description="2-oxoglutarate dehydrogenase E1 component">
    <location>
        <begin position="1"/>
        <end position="932"/>
    </location>
</feature>
<reference key="1">
    <citation type="journal article" date="2005" name="J. Bacteriol.">
        <title>Insights on evolution of virulence and resistance from the complete genome analysis of an early methicillin-resistant Staphylococcus aureus strain and a biofilm-producing methicillin-resistant Staphylococcus epidermidis strain.</title>
        <authorList>
            <person name="Gill S.R."/>
            <person name="Fouts D.E."/>
            <person name="Archer G.L."/>
            <person name="Mongodin E.F."/>
            <person name="DeBoy R.T."/>
            <person name="Ravel J."/>
            <person name="Paulsen I.T."/>
            <person name="Kolonay J.F."/>
            <person name="Brinkac L.M."/>
            <person name="Beanan M.J."/>
            <person name="Dodson R.J."/>
            <person name="Daugherty S.C."/>
            <person name="Madupu R."/>
            <person name="Angiuoli S.V."/>
            <person name="Durkin A.S."/>
            <person name="Haft D.H."/>
            <person name="Vamathevan J.J."/>
            <person name="Khouri H."/>
            <person name="Utterback T.R."/>
            <person name="Lee C."/>
            <person name="Dimitrov G."/>
            <person name="Jiang L."/>
            <person name="Qin H."/>
            <person name="Weidman J."/>
            <person name="Tran K."/>
            <person name="Kang K.H."/>
            <person name="Hance I.R."/>
            <person name="Nelson K.E."/>
            <person name="Fraser C.M."/>
        </authorList>
    </citation>
    <scope>NUCLEOTIDE SEQUENCE [LARGE SCALE GENOMIC DNA]</scope>
    <source>
        <strain>COL</strain>
    </source>
</reference>
<evidence type="ECO:0000255" key="1">
    <source>
        <dbReference type="HAMAP-Rule" id="MF_01169"/>
    </source>
</evidence>
<keyword id="KW-0324">Glycolysis</keyword>
<keyword id="KW-0560">Oxidoreductase</keyword>
<keyword id="KW-0786">Thiamine pyrophosphate</keyword>
<gene>
    <name evidence="1" type="primary">odhA</name>
    <name type="ordered locus">SACOL1449</name>
</gene>
<accession>Q5HG06</accession>
<protein>
    <recommendedName>
        <fullName evidence="1">2-oxoglutarate dehydrogenase E1 component</fullName>
        <ecNumber evidence="1">1.2.4.2</ecNumber>
    </recommendedName>
    <alternativeName>
        <fullName evidence="1">Alpha-ketoglutarate dehydrogenase</fullName>
    </alternativeName>
</protein>
<dbReference type="EC" id="1.2.4.2" evidence="1"/>
<dbReference type="EMBL" id="CP000046">
    <property type="protein sequence ID" value="AAW38194.1"/>
    <property type="molecule type" value="Genomic_DNA"/>
</dbReference>
<dbReference type="RefSeq" id="WP_000180666.1">
    <property type="nucleotide sequence ID" value="NZ_JBGOFO010000003.1"/>
</dbReference>
<dbReference type="SMR" id="Q5HG06"/>
<dbReference type="KEGG" id="sac:SACOL1449"/>
<dbReference type="HOGENOM" id="CLU_004709_1_0_9"/>
<dbReference type="Proteomes" id="UP000000530">
    <property type="component" value="Chromosome"/>
</dbReference>
<dbReference type="GO" id="GO:0005829">
    <property type="term" value="C:cytosol"/>
    <property type="evidence" value="ECO:0007669"/>
    <property type="project" value="TreeGrafter"/>
</dbReference>
<dbReference type="GO" id="GO:0045252">
    <property type="term" value="C:oxoglutarate dehydrogenase complex"/>
    <property type="evidence" value="ECO:0007669"/>
    <property type="project" value="TreeGrafter"/>
</dbReference>
<dbReference type="GO" id="GO:0004591">
    <property type="term" value="F:oxoglutarate dehydrogenase (succinyl-transferring) activity"/>
    <property type="evidence" value="ECO:0007669"/>
    <property type="project" value="UniProtKB-UniRule"/>
</dbReference>
<dbReference type="GO" id="GO:0030976">
    <property type="term" value="F:thiamine pyrophosphate binding"/>
    <property type="evidence" value="ECO:0007669"/>
    <property type="project" value="UniProtKB-UniRule"/>
</dbReference>
<dbReference type="GO" id="GO:0006096">
    <property type="term" value="P:glycolytic process"/>
    <property type="evidence" value="ECO:0007669"/>
    <property type="project" value="UniProtKB-UniRule"/>
</dbReference>
<dbReference type="GO" id="GO:0006099">
    <property type="term" value="P:tricarboxylic acid cycle"/>
    <property type="evidence" value="ECO:0007669"/>
    <property type="project" value="TreeGrafter"/>
</dbReference>
<dbReference type="CDD" id="cd02016">
    <property type="entry name" value="TPP_E1_OGDC_like"/>
    <property type="match status" value="1"/>
</dbReference>
<dbReference type="FunFam" id="3.40.50.11610:FF:000002">
    <property type="entry name" value="2-oxoglutarate dehydrogenase E1 component"/>
    <property type="match status" value="1"/>
</dbReference>
<dbReference type="FunFam" id="3.40.50.970:FF:000036">
    <property type="entry name" value="2-oxoglutarate dehydrogenase E1 component"/>
    <property type="match status" value="1"/>
</dbReference>
<dbReference type="Gene3D" id="3.40.50.12470">
    <property type="match status" value="1"/>
</dbReference>
<dbReference type="Gene3D" id="3.40.50.970">
    <property type="match status" value="1"/>
</dbReference>
<dbReference type="Gene3D" id="3.40.50.11610">
    <property type="entry name" value="Multifunctional 2-oxoglutarate metabolism enzyme, C-terminal domain"/>
    <property type="match status" value="1"/>
</dbReference>
<dbReference type="Gene3D" id="1.10.287.1150">
    <property type="entry name" value="TPP helical domain"/>
    <property type="match status" value="1"/>
</dbReference>
<dbReference type="HAMAP" id="MF_01169">
    <property type="entry name" value="SucA_OdhA"/>
    <property type="match status" value="1"/>
</dbReference>
<dbReference type="InterPro" id="IPR011603">
    <property type="entry name" value="2oxoglutarate_DH_E1"/>
</dbReference>
<dbReference type="InterPro" id="IPR023784">
    <property type="entry name" value="2oxoglutarate_DH_E1_bac"/>
</dbReference>
<dbReference type="InterPro" id="IPR001017">
    <property type="entry name" value="DH_E1"/>
</dbReference>
<dbReference type="InterPro" id="IPR042179">
    <property type="entry name" value="KGD_C_sf"/>
</dbReference>
<dbReference type="InterPro" id="IPR031717">
    <property type="entry name" value="ODO-1/KGD_C"/>
</dbReference>
<dbReference type="InterPro" id="IPR029061">
    <property type="entry name" value="THDP-binding"/>
</dbReference>
<dbReference type="InterPro" id="IPR005475">
    <property type="entry name" value="Transketolase-like_Pyr-bd"/>
</dbReference>
<dbReference type="NCBIfam" id="TIGR00239">
    <property type="entry name" value="2oxo_dh_E1"/>
    <property type="match status" value="1"/>
</dbReference>
<dbReference type="NCBIfam" id="NF006914">
    <property type="entry name" value="PRK09404.1"/>
    <property type="match status" value="1"/>
</dbReference>
<dbReference type="NCBIfam" id="NF008907">
    <property type="entry name" value="PRK12270.1"/>
    <property type="match status" value="1"/>
</dbReference>
<dbReference type="PANTHER" id="PTHR23152:SF4">
    <property type="entry name" value="2-OXOADIPATE DEHYDROGENASE COMPLEX COMPONENT E1"/>
    <property type="match status" value="1"/>
</dbReference>
<dbReference type="PANTHER" id="PTHR23152">
    <property type="entry name" value="2-OXOGLUTARATE DEHYDROGENASE"/>
    <property type="match status" value="1"/>
</dbReference>
<dbReference type="Pfam" id="PF00676">
    <property type="entry name" value="E1_dh"/>
    <property type="match status" value="1"/>
</dbReference>
<dbReference type="Pfam" id="PF16870">
    <property type="entry name" value="OxoGdeHyase_C"/>
    <property type="match status" value="1"/>
</dbReference>
<dbReference type="Pfam" id="PF02779">
    <property type="entry name" value="Transket_pyr"/>
    <property type="match status" value="1"/>
</dbReference>
<dbReference type="PIRSF" id="PIRSF000157">
    <property type="entry name" value="Oxoglu_dh_E1"/>
    <property type="match status" value="1"/>
</dbReference>
<dbReference type="SMART" id="SM00861">
    <property type="entry name" value="Transket_pyr"/>
    <property type="match status" value="1"/>
</dbReference>
<dbReference type="SUPFAM" id="SSF52518">
    <property type="entry name" value="Thiamin diphosphate-binding fold (THDP-binding)"/>
    <property type="match status" value="2"/>
</dbReference>
<organism>
    <name type="scientific">Staphylococcus aureus (strain COL)</name>
    <dbReference type="NCBI Taxonomy" id="93062"/>
    <lineage>
        <taxon>Bacteria</taxon>
        <taxon>Bacillati</taxon>
        <taxon>Bacillota</taxon>
        <taxon>Bacilli</taxon>
        <taxon>Bacillales</taxon>
        <taxon>Staphylococcaceae</taxon>
        <taxon>Staphylococcus</taxon>
    </lineage>
</organism>
<proteinExistence type="inferred from homology"/>
<name>ODO1_STAAC</name>